<name>PHS1_CUPPJ</name>
<gene>
    <name type="ordered locus">Reut_A0417</name>
</gene>
<protein>
    <recommendedName>
        <fullName evidence="1">Putative pterin-4-alpha-carbinolamine dehydratase 1</fullName>
        <shortName evidence="1">PHS 1</shortName>
        <ecNumber evidence="1">4.2.1.96</ecNumber>
    </recommendedName>
    <alternativeName>
        <fullName evidence="1">4-alpha-hydroxy-tetrahydropterin dehydratase 1</fullName>
    </alternativeName>
    <alternativeName>
        <fullName evidence="1">Pterin carbinolamine dehydratase 1</fullName>
        <shortName evidence="1">PCD 1</shortName>
    </alternativeName>
</protein>
<feature type="chain" id="PRO_0000231469" description="Putative pterin-4-alpha-carbinolamine dehydratase 1">
    <location>
        <begin position="1"/>
        <end position="116"/>
    </location>
</feature>
<organism>
    <name type="scientific">Cupriavidus pinatubonensis (strain JMP 134 / LMG 1197)</name>
    <name type="common">Cupriavidus necator (strain JMP 134)</name>
    <dbReference type="NCBI Taxonomy" id="264198"/>
    <lineage>
        <taxon>Bacteria</taxon>
        <taxon>Pseudomonadati</taxon>
        <taxon>Pseudomonadota</taxon>
        <taxon>Betaproteobacteria</taxon>
        <taxon>Burkholderiales</taxon>
        <taxon>Burkholderiaceae</taxon>
        <taxon>Cupriavidus</taxon>
    </lineage>
</organism>
<accession>Q475Y4</accession>
<evidence type="ECO:0000255" key="1">
    <source>
        <dbReference type="HAMAP-Rule" id="MF_00434"/>
    </source>
</evidence>
<reference key="1">
    <citation type="journal article" date="2010" name="PLoS ONE">
        <title>The complete multipartite genome sequence of Cupriavidus necator JMP134, a versatile pollutant degrader.</title>
        <authorList>
            <person name="Lykidis A."/>
            <person name="Perez-Pantoja D."/>
            <person name="Ledger T."/>
            <person name="Mavromatis K."/>
            <person name="Anderson I.J."/>
            <person name="Ivanova N.N."/>
            <person name="Hooper S.D."/>
            <person name="Lapidus A."/>
            <person name="Lucas S."/>
            <person name="Gonzalez B."/>
            <person name="Kyrpides N.C."/>
        </authorList>
    </citation>
    <scope>NUCLEOTIDE SEQUENCE [LARGE SCALE GENOMIC DNA]</scope>
    <source>
        <strain>JMP134 / LMG 1197</strain>
    </source>
</reference>
<dbReference type="EC" id="4.2.1.96" evidence="1"/>
<dbReference type="EMBL" id="CP000090">
    <property type="protein sequence ID" value="AAZ59799.1"/>
    <property type="molecule type" value="Genomic_DNA"/>
</dbReference>
<dbReference type="SMR" id="Q475Y4"/>
<dbReference type="STRING" id="264198.Reut_A0417"/>
<dbReference type="KEGG" id="reu:Reut_A0417"/>
<dbReference type="eggNOG" id="COG2154">
    <property type="taxonomic scope" value="Bacteria"/>
</dbReference>
<dbReference type="HOGENOM" id="CLU_081974_2_2_4"/>
<dbReference type="OrthoDB" id="9794987at2"/>
<dbReference type="GO" id="GO:0008124">
    <property type="term" value="F:4-alpha-hydroxytetrahydrobiopterin dehydratase activity"/>
    <property type="evidence" value="ECO:0007669"/>
    <property type="project" value="UniProtKB-UniRule"/>
</dbReference>
<dbReference type="GO" id="GO:0006729">
    <property type="term" value="P:tetrahydrobiopterin biosynthetic process"/>
    <property type="evidence" value="ECO:0007669"/>
    <property type="project" value="InterPro"/>
</dbReference>
<dbReference type="CDD" id="cd00913">
    <property type="entry name" value="PCD_DCoH_subfamily_a"/>
    <property type="match status" value="1"/>
</dbReference>
<dbReference type="Gene3D" id="3.30.1360.20">
    <property type="entry name" value="Transcriptional coactivator/pterin dehydratase"/>
    <property type="match status" value="1"/>
</dbReference>
<dbReference type="HAMAP" id="MF_00434">
    <property type="entry name" value="Pterin_4_alpha"/>
    <property type="match status" value="1"/>
</dbReference>
<dbReference type="InterPro" id="IPR036428">
    <property type="entry name" value="PCD_sf"/>
</dbReference>
<dbReference type="InterPro" id="IPR050376">
    <property type="entry name" value="Pterin-4-alpha-carb_dehyd"/>
</dbReference>
<dbReference type="InterPro" id="IPR001533">
    <property type="entry name" value="Pterin_deHydtase"/>
</dbReference>
<dbReference type="PANTHER" id="PTHR42805">
    <property type="entry name" value="PTERIN-4-ALPHA-CARBINOLAMINE DEHYDRATASE-RELATED"/>
    <property type="match status" value="1"/>
</dbReference>
<dbReference type="PANTHER" id="PTHR42805:SF1">
    <property type="entry name" value="PTERIN-4-ALPHA-CARBINOLAMINE DEHYDRATASE-RELATED"/>
    <property type="match status" value="1"/>
</dbReference>
<dbReference type="Pfam" id="PF01329">
    <property type="entry name" value="Pterin_4a"/>
    <property type="match status" value="1"/>
</dbReference>
<dbReference type="SUPFAM" id="SSF55248">
    <property type="entry name" value="PCD-like"/>
    <property type="match status" value="1"/>
</dbReference>
<sequence>MSEKLESQTCTPCRGGIPPLERAEAEALLVETPGWTLADDAGRLERSFTFRNFAQALEFVSGVGRLAEEQGHHPEISFGWGHATVSWRTKKIKGLHRNDFVMAAKTSELAAGMTQG</sequence>
<proteinExistence type="inferred from homology"/>
<comment type="catalytic activity">
    <reaction evidence="1">
        <text>(4aS,6R)-4a-hydroxy-L-erythro-5,6,7,8-tetrahydrobiopterin = (6R)-L-erythro-6,7-dihydrobiopterin + H2O</text>
        <dbReference type="Rhea" id="RHEA:11920"/>
        <dbReference type="ChEBI" id="CHEBI:15377"/>
        <dbReference type="ChEBI" id="CHEBI:15642"/>
        <dbReference type="ChEBI" id="CHEBI:43120"/>
        <dbReference type="EC" id="4.2.1.96"/>
    </reaction>
</comment>
<comment type="similarity">
    <text evidence="1">Belongs to the pterin-4-alpha-carbinolamine dehydratase family.</text>
</comment>
<keyword id="KW-0456">Lyase</keyword>